<evidence type="ECO:0000255" key="1">
    <source>
        <dbReference type="HAMAP-Rule" id="MF_00229"/>
    </source>
</evidence>
<gene>
    <name evidence="1" type="primary">hutH</name>
    <name type="ordered locus">GDI0550</name>
    <name type="ordered locus">Gdia_1458</name>
</gene>
<protein>
    <recommendedName>
        <fullName evidence="1">Histidine ammonia-lyase</fullName>
        <shortName evidence="1">Histidase</shortName>
        <ecNumber evidence="1">4.3.1.3</ecNumber>
    </recommendedName>
</protein>
<comment type="catalytic activity">
    <reaction evidence="1">
        <text>L-histidine = trans-urocanate + NH4(+)</text>
        <dbReference type="Rhea" id="RHEA:21232"/>
        <dbReference type="ChEBI" id="CHEBI:17771"/>
        <dbReference type="ChEBI" id="CHEBI:28938"/>
        <dbReference type="ChEBI" id="CHEBI:57595"/>
        <dbReference type="EC" id="4.3.1.3"/>
    </reaction>
</comment>
<comment type="pathway">
    <text evidence="1">Amino-acid degradation; L-histidine degradation into L-glutamate; N-formimidoyl-L-glutamate from L-histidine: step 1/3.</text>
</comment>
<comment type="subcellular location">
    <subcellularLocation>
        <location evidence="1">Cytoplasm</location>
    </subcellularLocation>
</comment>
<comment type="PTM">
    <text evidence="1">Contains an active site 4-methylidene-imidazol-5-one (MIO), which is formed autocatalytically by cyclization and dehydration of residues Ala-Ser-Gly.</text>
</comment>
<comment type="similarity">
    <text evidence="1">Belongs to the PAL/histidase family.</text>
</comment>
<reference key="1">
    <citation type="journal article" date="2009" name="BMC Genomics">
        <title>Complete genome sequence of the sugarcane nitrogen-fixing endophyte Gluconacetobacter diazotrophicus Pal5.</title>
        <authorList>
            <person name="Bertalan M."/>
            <person name="Albano R."/>
            <person name="de Padua V."/>
            <person name="Rouws L."/>
            <person name="Rojas C."/>
            <person name="Hemerly A."/>
            <person name="Teixeira K."/>
            <person name="Schwab S."/>
            <person name="Araujo J."/>
            <person name="Oliveira A."/>
            <person name="Franca L."/>
            <person name="Magalhaes V."/>
            <person name="Alqueres S."/>
            <person name="Cardoso A."/>
            <person name="Almeida W."/>
            <person name="Loureiro M.M."/>
            <person name="Nogueira E."/>
            <person name="Cidade D."/>
            <person name="Oliveira D."/>
            <person name="Simao T."/>
            <person name="Macedo J."/>
            <person name="Valadao A."/>
            <person name="Dreschsel M."/>
            <person name="Freitas F."/>
            <person name="Vidal M."/>
            <person name="Guedes H."/>
            <person name="Rodrigues E."/>
            <person name="Meneses C."/>
            <person name="Brioso P."/>
            <person name="Pozzer L."/>
            <person name="Figueiredo D."/>
            <person name="Montano H."/>
            <person name="Junior J."/>
            <person name="de Souza Filho G."/>
            <person name="Martin Quintana Flores V."/>
            <person name="Ferreira B."/>
            <person name="Branco A."/>
            <person name="Gonzalez P."/>
            <person name="Guillobel H."/>
            <person name="Lemos M."/>
            <person name="Seibel L."/>
            <person name="Macedo J."/>
            <person name="Alves-Ferreira M."/>
            <person name="Sachetto-Martins G."/>
            <person name="Coelho A."/>
            <person name="Santos E."/>
            <person name="Amaral G."/>
            <person name="Neves A."/>
            <person name="Pacheco A.B."/>
            <person name="Carvalho D."/>
            <person name="Lery L."/>
            <person name="Bisch P."/>
            <person name="Rossle S.C."/>
            <person name="Urmenyi T."/>
            <person name="Rael Pereira A."/>
            <person name="Silva R."/>
            <person name="Rondinelli E."/>
            <person name="von Kruger W."/>
            <person name="Martins O."/>
            <person name="Baldani J.I."/>
            <person name="Ferreira P.C."/>
        </authorList>
    </citation>
    <scope>NUCLEOTIDE SEQUENCE [LARGE SCALE GENOMIC DNA]</scope>
    <source>
        <strain>ATCC 49037 / DSM 5601 / CCUG 37298 / CIP 103539 / LMG 7603 / PAl5</strain>
    </source>
</reference>
<reference key="2">
    <citation type="journal article" date="2010" name="Stand. Genomic Sci.">
        <title>Two genome sequences of the same bacterial strain, Gluconacetobacter diazotrophicus PAl 5, suggest a new standard in genome sequence submission.</title>
        <authorList>
            <person name="Giongo A."/>
            <person name="Tyler H.L."/>
            <person name="Zipperer U.N."/>
            <person name="Triplett E.W."/>
        </authorList>
    </citation>
    <scope>NUCLEOTIDE SEQUENCE [LARGE SCALE GENOMIC DNA]</scope>
    <source>
        <strain>ATCC 49037 / DSM 5601 / CCUG 37298 / CIP 103539 / LMG 7603 / PAl5</strain>
    </source>
</reference>
<proteinExistence type="inferred from homology"/>
<organism>
    <name type="scientific">Gluconacetobacter diazotrophicus (strain ATCC 49037 / DSM 5601 / CCUG 37298 / CIP 103539 / LMG 7603 / PAl5)</name>
    <dbReference type="NCBI Taxonomy" id="272568"/>
    <lineage>
        <taxon>Bacteria</taxon>
        <taxon>Pseudomonadati</taxon>
        <taxon>Pseudomonadota</taxon>
        <taxon>Alphaproteobacteria</taxon>
        <taxon>Acetobacterales</taxon>
        <taxon>Acetobacteraceae</taxon>
        <taxon>Gluconacetobacter</taxon>
    </lineage>
</organism>
<sequence length="515" mass="54014">MMTDSLILTPGTLSLADLRRLAFSAPSVTLAAGVRDTLAQAARSVDRIVADGRPVYGVNTGFGKLARTRIADANLRDLQRNLVLSHAAGIGAPMDDRTVRLILLLKANGLARGHSGVRPEIVDLLLEMGNRGVLPVIPQKGSVGASGDLAPLAHMTAVLIGAGQARVDGRVLPGDQALRAVGLAPVELGPKEGLALLNGTQASTALALVALFDAERVFQAALVTGALTLDAARGTDAPFDPRLHALRGQKGQIECAALYRALMADSAIRASHREDDERVQDPYCLRCQPQVMGACLDSLRHAASVLLIEANAVSDNPIHFAETDEMLSGGNFHAEPVAIAADLMAIAVSEVGAIAERRLALLVDAQMSGLPPFLVRDSGVNSGFMIAQVTAAALASENKTLAHPASIDSLPTSANQEDHVSMATFAARRVGDIVANVRDIVAIEYLAAVQGLDFLAPLQTSRPLAGAAAALRARVPFYDRDRIFTPDIEAARDLIADGVPTLLPGIADVLPRLEV</sequence>
<dbReference type="EC" id="4.3.1.3" evidence="1"/>
<dbReference type="EMBL" id="AM889285">
    <property type="protein sequence ID" value="CAP54493.1"/>
    <property type="molecule type" value="Genomic_DNA"/>
</dbReference>
<dbReference type="EMBL" id="CP001189">
    <property type="protein sequence ID" value="ACI51237.1"/>
    <property type="molecule type" value="Genomic_DNA"/>
</dbReference>
<dbReference type="RefSeq" id="WP_012223038.1">
    <property type="nucleotide sequence ID" value="NC_010125.1"/>
</dbReference>
<dbReference type="SMR" id="A9H863"/>
<dbReference type="STRING" id="272568.GDI0550"/>
<dbReference type="KEGG" id="gdi:GDI0550"/>
<dbReference type="KEGG" id="gdj:Gdia_1458"/>
<dbReference type="eggNOG" id="COG2986">
    <property type="taxonomic scope" value="Bacteria"/>
</dbReference>
<dbReference type="HOGENOM" id="CLU_014801_4_0_5"/>
<dbReference type="UniPathway" id="UPA00379">
    <property type="reaction ID" value="UER00549"/>
</dbReference>
<dbReference type="Proteomes" id="UP000001176">
    <property type="component" value="Chromosome"/>
</dbReference>
<dbReference type="GO" id="GO:0005737">
    <property type="term" value="C:cytoplasm"/>
    <property type="evidence" value="ECO:0007669"/>
    <property type="project" value="UniProtKB-SubCell"/>
</dbReference>
<dbReference type="GO" id="GO:0004397">
    <property type="term" value="F:histidine ammonia-lyase activity"/>
    <property type="evidence" value="ECO:0007669"/>
    <property type="project" value="UniProtKB-UniRule"/>
</dbReference>
<dbReference type="GO" id="GO:0019556">
    <property type="term" value="P:L-histidine catabolic process to glutamate and formamide"/>
    <property type="evidence" value="ECO:0007669"/>
    <property type="project" value="UniProtKB-UniPathway"/>
</dbReference>
<dbReference type="GO" id="GO:0019557">
    <property type="term" value="P:L-histidine catabolic process to glutamate and formate"/>
    <property type="evidence" value="ECO:0007669"/>
    <property type="project" value="UniProtKB-UniPathway"/>
</dbReference>
<dbReference type="CDD" id="cd00332">
    <property type="entry name" value="PAL-HAL"/>
    <property type="match status" value="1"/>
</dbReference>
<dbReference type="FunFam" id="1.10.275.10:FF:000005">
    <property type="entry name" value="Histidine ammonia-lyase"/>
    <property type="match status" value="1"/>
</dbReference>
<dbReference type="FunFam" id="1.20.200.10:FF:000003">
    <property type="entry name" value="Histidine ammonia-lyase"/>
    <property type="match status" value="1"/>
</dbReference>
<dbReference type="Gene3D" id="1.20.200.10">
    <property type="entry name" value="Fumarase/aspartase (Central domain)"/>
    <property type="match status" value="1"/>
</dbReference>
<dbReference type="Gene3D" id="1.10.275.10">
    <property type="entry name" value="Fumarase/aspartase (N-terminal domain)"/>
    <property type="match status" value="1"/>
</dbReference>
<dbReference type="HAMAP" id="MF_00229">
    <property type="entry name" value="His_ammonia_lyase"/>
    <property type="match status" value="1"/>
</dbReference>
<dbReference type="InterPro" id="IPR001106">
    <property type="entry name" value="Aromatic_Lyase"/>
</dbReference>
<dbReference type="InterPro" id="IPR024083">
    <property type="entry name" value="Fumarase/histidase_N"/>
</dbReference>
<dbReference type="InterPro" id="IPR005921">
    <property type="entry name" value="HutH"/>
</dbReference>
<dbReference type="InterPro" id="IPR008948">
    <property type="entry name" value="L-Aspartase-like"/>
</dbReference>
<dbReference type="InterPro" id="IPR022313">
    <property type="entry name" value="Phe/His_NH3-lyase_AS"/>
</dbReference>
<dbReference type="NCBIfam" id="TIGR01225">
    <property type="entry name" value="hutH"/>
    <property type="match status" value="1"/>
</dbReference>
<dbReference type="NCBIfam" id="NF006871">
    <property type="entry name" value="PRK09367.1"/>
    <property type="match status" value="1"/>
</dbReference>
<dbReference type="PANTHER" id="PTHR10362">
    <property type="entry name" value="HISTIDINE AMMONIA-LYASE"/>
    <property type="match status" value="1"/>
</dbReference>
<dbReference type="Pfam" id="PF00221">
    <property type="entry name" value="Lyase_aromatic"/>
    <property type="match status" value="1"/>
</dbReference>
<dbReference type="SUPFAM" id="SSF48557">
    <property type="entry name" value="L-aspartase-like"/>
    <property type="match status" value="1"/>
</dbReference>
<dbReference type="PROSITE" id="PS00488">
    <property type="entry name" value="PAL_HISTIDASE"/>
    <property type="match status" value="1"/>
</dbReference>
<keyword id="KW-0963">Cytoplasm</keyword>
<keyword id="KW-0369">Histidine metabolism</keyword>
<keyword id="KW-0456">Lyase</keyword>
<keyword id="KW-1185">Reference proteome</keyword>
<feature type="chain" id="PRO_1000078226" description="Histidine ammonia-lyase">
    <location>
        <begin position="1"/>
        <end position="515"/>
    </location>
</feature>
<feature type="modified residue" description="2,3-didehydroalanine (Ser)" evidence="1">
    <location>
        <position position="146"/>
    </location>
</feature>
<feature type="cross-link" description="5-imidazolinone (Ala-Gly)" evidence="1">
    <location>
        <begin position="145"/>
        <end position="147"/>
    </location>
</feature>
<accession>A9H863</accession>
<accession>B5ZIJ5</accession>
<name>HUTH_GLUDA</name>